<accession>A0RAB3</accession>
<sequence length="378" mass="42793">MNIWLSMLTTTGLGAIIGGFTNHLAIKMLFRPHRPMYIGKFQVPFTPGLIPKRRDELAVQLGKMVVEHLLTPEGIGKKLTNEEFQKGLIHWAQVEVDKVMTNEQSLRHMLEKWDVAHVEKEATEKIEQVIIEKIEAFLEEYYTYTWEQALPHSVHEKIENAIPNVSAFILKRATHFFESEEGKSRLSKMIDDFFASRGALLNLVGMFLGNVSVVDRVQPEVIKFLGQDGTKQLLTDVLQKEWEKLKGRDVKELETFVEKEMIASSILSAVQVEETVGKFLNQSVQQVCEPVRETIIEKVVPGAVTKGLEWGAKNVESILNNLHLAEIVQQEVSTFSTERLEDLVLSITKNELKMITYLGALLGGMIGIVQGLLLLFLK</sequence>
<protein>
    <recommendedName>
        <fullName>UPF0754 membrane protein BALH_0780</fullName>
    </recommendedName>
</protein>
<keyword id="KW-1003">Cell membrane</keyword>
<keyword id="KW-0472">Membrane</keyword>
<keyword id="KW-0812">Transmembrane</keyword>
<keyword id="KW-1133">Transmembrane helix</keyword>
<gene>
    <name type="ordered locus">BALH_0780</name>
</gene>
<comment type="subcellular location">
    <subcellularLocation>
        <location evidence="1">Cell membrane</location>
        <topology evidence="1">Multi-pass membrane protein</topology>
    </subcellularLocation>
</comment>
<comment type="similarity">
    <text evidence="3">Belongs to the UPF0754 family.</text>
</comment>
<comment type="sequence caution" evidence="3">
    <conflict type="erroneous initiation">
        <sequence resource="EMBL-CDS" id="ABK84156"/>
    </conflict>
</comment>
<dbReference type="EMBL" id="CP000485">
    <property type="protein sequence ID" value="ABK84156.1"/>
    <property type="status" value="ALT_INIT"/>
    <property type="molecule type" value="Genomic_DNA"/>
</dbReference>
<dbReference type="SMR" id="A0RAB3"/>
<dbReference type="KEGG" id="btl:BALH_0780"/>
<dbReference type="HOGENOM" id="CLU_042384_0_0_9"/>
<dbReference type="GO" id="GO:0005886">
    <property type="term" value="C:plasma membrane"/>
    <property type="evidence" value="ECO:0007669"/>
    <property type="project" value="UniProtKB-SubCell"/>
</dbReference>
<dbReference type="InterPro" id="IPR007383">
    <property type="entry name" value="DUF445"/>
</dbReference>
<dbReference type="InterPro" id="IPR016991">
    <property type="entry name" value="UCP032178"/>
</dbReference>
<dbReference type="PANTHER" id="PTHR35791">
    <property type="entry name" value="UPF0754 MEMBRANE PROTEIN YHEB"/>
    <property type="match status" value="1"/>
</dbReference>
<dbReference type="PANTHER" id="PTHR35791:SF1">
    <property type="entry name" value="UPF0754 MEMBRANE PROTEIN YHEB"/>
    <property type="match status" value="1"/>
</dbReference>
<dbReference type="Pfam" id="PF04286">
    <property type="entry name" value="DUF445"/>
    <property type="match status" value="1"/>
</dbReference>
<dbReference type="PIRSF" id="PIRSF032178">
    <property type="entry name" value="UCP032178"/>
    <property type="match status" value="1"/>
</dbReference>
<evidence type="ECO:0000250" key="1"/>
<evidence type="ECO:0000255" key="2"/>
<evidence type="ECO:0000305" key="3"/>
<feature type="chain" id="PRO_0000388284" description="UPF0754 membrane protein BALH_0780">
    <location>
        <begin position="1"/>
        <end position="378"/>
    </location>
</feature>
<feature type="transmembrane region" description="Helical" evidence="2">
    <location>
        <begin position="1"/>
        <end position="21"/>
    </location>
</feature>
<feature type="transmembrane region" description="Helical" evidence="2">
    <location>
        <begin position="357"/>
        <end position="377"/>
    </location>
</feature>
<organism>
    <name type="scientific">Bacillus thuringiensis (strain Al Hakam)</name>
    <dbReference type="NCBI Taxonomy" id="412694"/>
    <lineage>
        <taxon>Bacteria</taxon>
        <taxon>Bacillati</taxon>
        <taxon>Bacillota</taxon>
        <taxon>Bacilli</taxon>
        <taxon>Bacillales</taxon>
        <taxon>Bacillaceae</taxon>
        <taxon>Bacillus</taxon>
        <taxon>Bacillus cereus group</taxon>
    </lineage>
</organism>
<proteinExistence type="inferred from homology"/>
<name>Y780_BACAH</name>
<reference key="1">
    <citation type="journal article" date="2007" name="J. Bacteriol.">
        <title>The complete genome sequence of Bacillus thuringiensis Al Hakam.</title>
        <authorList>
            <person name="Challacombe J.F."/>
            <person name="Altherr M.R."/>
            <person name="Xie G."/>
            <person name="Bhotika S.S."/>
            <person name="Brown N."/>
            <person name="Bruce D."/>
            <person name="Campbell C.S."/>
            <person name="Campbell M.L."/>
            <person name="Chen J."/>
            <person name="Chertkov O."/>
            <person name="Cleland C."/>
            <person name="Dimitrijevic M."/>
            <person name="Doggett N.A."/>
            <person name="Fawcett J.J."/>
            <person name="Glavina T."/>
            <person name="Goodwin L.A."/>
            <person name="Green L.D."/>
            <person name="Han C.S."/>
            <person name="Hill K.K."/>
            <person name="Hitchcock P."/>
            <person name="Jackson P.J."/>
            <person name="Keim P."/>
            <person name="Kewalramani A.R."/>
            <person name="Longmire J."/>
            <person name="Lucas S."/>
            <person name="Malfatti S."/>
            <person name="Martinez D."/>
            <person name="McMurry K."/>
            <person name="Meincke L.J."/>
            <person name="Misra M."/>
            <person name="Moseman B.L."/>
            <person name="Mundt M."/>
            <person name="Munk A.C."/>
            <person name="Okinaka R.T."/>
            <person name="Parson-Quintana B."/>
            <person name="Reilly L.P."/>
            <person name="Richardson P."/>
            <person name="Robinson D.L."/>
            <person name="Saunders E."/>
            <person name="Tapia R."/>
            <person name="Tesmer J.G."/>
            <person name="Thayer N."/>
            <person name="Thompson L.S."/>
            <person name="Tice H."/>
            <person name="Ticknor L.O."/>
            <person name="Wills P.L."/>
            <person name="Gilna P."/>
            <person name="Brettin T.S."/>
        </authorList>
    </citation>
    <scope>NUCLEOTIDE SEQUENCE [LARGE SCALE GENOMIC DNA]</scope>
    <source>
        <strain>Al Hakam</strain>
    </source>
</reference>